<keyword id="KW-0067">ATP-binding</keyword>
<keyword id="KW-0963">Cytoplasm</keyword>
<keyword id="KW-0235">DNA replication</keyword>
<keyword id="KW-0238">DNA-binding</keyword>
<keyword id="KW-0446">Lipid-binding</keyword>
<keyword id="KW-0547">Nucleotide-binding</keyword>
<comment type="function">
    <text evidence="1">Plays an essential role in the initiation and regulation of chromosomal replication. ATP-DnaA binds to the origin of replication (oriC) to initiate formation of the DNA replication initiation complex once per cell cycle. Binds the DnaA box (a 9 base pair repeat at the origin) and separates the double-stranded (ds)DNA. Forms a right-handed helical filament on oriC DNA; dsDNA binds to the exterior of the filament while single-stranded (ss)DNA is stabiized in the filament's interior. The ATP-DnaA-oriC complex binds and stabilizes one strand of the AT-rich DNA unwinding element (DUE), permitting loading of DNA polymerase. After initiation quickly degrades to an ADP-DnaA complex that is not apt for DNA replication. Binds acidic phospholipids.</text>
</comment>
<comment type="subunit">
    <text evidence="1">Oligomerizes as a right-handed, spiral filament on DNA at oriC.</text>
</comment>
<comment type="subcellular location">
    <subcellularLocation>
        <location evidence="1">Cytoplasm</location>
    </subcellularLocation>
</comment>
<comment type="domain">
    <text evidence="1">Domain I is involved in oligomerization and binding regulators, domain II is flexibile and of varying length in different bacteria, domain III forms the AAA+ region, while domain IV binds dsDNA.</text>
</comment>
<comment type="similarity">
    <text evidence="1">Belongs to the DnaA family.</text>
</comment>
<organism>
    <name type="scientific">Histophilus somni (strain 129Pt)</name>
    <name type="common">Haemophilus somnus</name>
    <dbReference type="NCBI Taxonomy" id="205914"/>
    <lineage>
        <taxon>Bacteria</taxon>
        <taxon>Pseudomonadati</taxon>
        <taxon>Pseudomonadota</taxon>
        <taxon>Gammaproteobacteria</taxon>
        <taxon>Pasteurellales</taxon>
        <taxon>Pasteurellaceae</taxon>
        <taxon>Histophilus</taxon>
    </lineage>
</organism>
<accession>Q0I0Y7</accession>
<feature type="chain" id="PRO_1000048651" description="Chromosomal replication initiator protein DnaA">
    <location>
        <begin position="1"/>
        <end position="452"/>
    </location>
</feature>
<feature type="region of interest" description="Domain I, interacts with DnaA modulators" evidence="1">
    <location>
        <begin position="1"/>
        <end position="80"/>
    </location>
</feature>
<feature type="region of interest" description="Domain II" evidence="1">
    <location>
        <begin position="80"/>
        <end position="114"/>
    </location>
</feature>
<feature type="region of interest" description="Domain III, AAA+ region" evidence="1">
    <location>
        <begin position="115"/>
        <end position="332"/>
    </location>
</feature>
<feature type="region of interest" description="Domain IV, binds dsDNA" evidence="1">
    <location>
        <begin position="333"/>
        <end position="452"/>
    </location>
</feature>
<feature type="binding site" evidence="1">
    <location>
        <position position="160"/>
    </location>
    <ligand>
        <name>ATP</name>
        <dbReference type="ChEBI" id="CHEBI:30616"/>
    </ligand>
</feature>
<feature type="binding site" evidence="1">
    <location>
        <position position="162"/>
    </location>
    <ligand>
        <name>ATP</name>
        <dbReference type="ChEBI" id="CHEBI:30616"/>
    </ligand>
</feature>
<feature type="binding site" evidence="1">
    <location>
        <position position="163"/>
    </location>
    <ligand>
        <name>ATP</name>
        <dbReference type="ChEBI" id="CHEBI:30616"/>
    </ligand>
</feature>
<feature type="binding site" evidence="1">
    <location>
        <position position="164"/>
    </location>
    <ligand>
        <name>ATP</name>
        <dbReference type="ChEBI" id="CHEBI:30616"/>
    </ligand>
</feature>
<name>DNAA_HISS1</name>
<protein>
    <recommendedName>
        <fullName evidence="1">Chromosomal replication initiator protein DnaA</fullName>
    </recommendedName>
</protein>
<evidence type="ECO:0000255" key="1">
    <source>
        <dbReference type="HAMAP-Rule" id="MF_00377"/>
    </source>
</evidence>
<reference key="1">
    <citation type="journal article" date="2007" name="J. Bacteriol.">
        <title>Complete genome sequence of Haemophilus somnus (Histophilus somni) strain 129Pt and comparison to Haemophilus ducreyi 35000HP and Haemophilus influenzae Rd.</title>
        <authorList>
            <person name="Challacombe J.F."/>
            <person name="Duncan A.J."/>
            <person name="Brettin T.S."/>
            <person name="Bruce D."/>
            <person name="Chertkov O."/>
            <person name="Detter J.C."/>
            <person name="Han C.S."/>
            <person name="Misra M."/>
            <person name="Richardson P."/>
            <person name="Tapia R."/>
            <person name="Thayer N."/>
            <person name="Xie G."/>
            <person name="Inzana T.J."/>
        </authorList>
    </citation>
    <scope>NUCLEOTIDE SEQUENCE [LARGE SCALE GENOMIC DNA]</scope>
    <source>
        <strain>129Pt</strain>
    </source>
</reference>
<dbReference type="EMBL" id="CP000436">
    <property type="protein sequence ID" value="ABI24414.1"/>
    <property type="molecule type" value="Genomic_DNA"/>
</dbReference>
<dbReference type="SMR" id="Q0I0Y7"/>
<dbReference type="KEGG" id="hso:HS_0136"/>
<dbReference type="eggNOG" id="COG0593">
    <property type="taxonomic scope" value="Bacteria"/>
</dbReference>
<dbReference type="HOGENOM" id="CLU_026910_0_1_6"/>
<dbReference type="GO" id="GO:0005737">
    <property type="term" value="C:cytoplasm"/>
    <property type="evidence" value="ECO:0007669"/>
    <property type="project" value="UniProtKB-SubCell"/>
</dbReference>
<dbReference type="GO" id="GO:0005886">
    <property type="term" value="C:plasma membrane"/>
    <property type="evidence" value="ECO:0007669"/>
    <property type="project" value="TreeGrafter"/>
</dbReference>
<dbReference type="GO" id="GO:0005524">
    <property type="term" value="F:ATP binding"/>
    <property type="evidence" value="ECO:0007669"/>
    <property type="project" value="UniProtKB-UniRule"/>
</dbReference>
<dbReference type="GO" id="GO:0016887">
    <property type="term" value="F:ATP hydrolysis activity"/>
    <property type="evidence" value="ECO:0007669"/>
    <property type="project" value="InterPro"/>
</dbReference>
<dbReference type="GO" id="GO:0003688">
    <property type="term" value="F:DNA replication origin binding"/>
    <property type="evidence" value="ECO:0007669"/>
    <property type="project" value="UniProtKB-UniRule"/>
</dbReference>
<dbReference type="GO" id="GO:0008289">
    <property type="term" value="F:lipid binding"/>
    <property type="evidence" value="ECO:0007669"/>
    <property type="project" value="UniProtKB-KW"/>
</dbReference>
<dbReference type="GO" id="GO:0006270">
    <property type="term" value="P:DNA replication initiation"/>
    <property type="evidence" value="ECO:0007669"/>
    <property type="project" value="UniProtKB-UniRule"/>
</dbReference>
<dbReference type="GO" id="GO:0006275">
    <property type="term" value="P:regulation of DNA replication"/>
    <property type="evidence" value="ECO:0007669"/>
    <property type="project" value="UniProtKB-UniRule"/>
</dbReference>
<dbReference type="CDD" id="cd00009">
    <property type="entry name" value="AAA"/>
    <property type="match status" value="1"/>
</dbReference>
<dbReference type="CDD" id="cd06571">
    <property type="entry name" value="Bac_DnaA_C"/>
    <property type="match status" value="1"/>
</dbReference>
<dbReference type="FunFam" id="1.10.1750.10:FF:000001">
    <property type="entry name" value="Chromosomal replication initiator protein DnaA"/>
    <property type="match status" value="1"/>
</dbReference>
<dbReference type="FunFam" id="1.10.8.60:FF:000003">
    <property type="entry name" value="Chromosomal replication initiator protein DnaA"/>
    <property type="match status" value="1"/>
</dbReference>
<dbReference type="FunFam" id="3.40.50.300:FF:000103">
    <property type="entry name" value="Chromosomal replication initiator protein DnaA"/>
    <property type="match status" value="1"/>
</dbReference>
<dbReference type="Gene3D" id="1.10.1750.10">
    <property type="match status" value="1"/>
</dbReference>
<dbReference type="Gene3D" id="1.10.8.60">
    <property type="match status" value="1"/>
</dbReference>
<dbReference type="Gene3D" id="3.30.300.180">
    <property type="match status" value="1"/>
</dbReference>
<dbReference type="Gene3D" id="3.40.50.300">
    <property type="entry name" value="P-loop containing nucleotide triphosphate hydrolases"/>
    <property type="match status" value="1"/>
</dbReference>
<dbReference type="HAMAP" id="MF_00377">
    <property type="entry name" value="DnaA_bact"/>
    <property type="match status" value="1"/>
</dbReference>
<dbReference type="InterPro" id="IPR003593">
    <property type="entry name" value="AAA+_ATPase"/>
</dbReference>
<dbReference type="InterPro" id="IPR001957">
    <property type="entry name" value="Chromosome_initiator_DnaA"/>
</dbReference>
<dbReference type="InterPro" id="IPR020591">
    <property type="entry name" value="Chromosome_initiator_DnaA-like"/>
</dbReference>
<dbReference type="InterPro" id="IPR018312">
    <property type="entry name" value="Chromosome_initiator_DnaA_CS"/>
</dbReference>
<dbReference type="InterPro" id="IPR013159">
    <property type="entry name" value="DnaA_C"/>
</dbReference>
<dbReference type="InterPro" id="IPR013317">
    <property type="entry name" value="DnaA_dom"/>
</dbReference>
<dbReference type="InterPro" id="IPR024633">
    <property type="entry name" value="DnaA_N_dom"/>
</dbReference>
<dbReference type="InterPro" id="IPR038454">
    <property type="entry name" value="DnaA_N_sf"/>
</dbReference>
<dbReference type="InterPro" id="IPR027417">
    <property type="entry name" value="P-loop_NTPase"/>
</dbReference>
<dbReference type="InterPro" id="IPR010921">
    <property type="entry name" value="Trp_repressor/repl_initiator"/>
</dbReference>
<dbReference type="NCBIfam" id="TIGR00362">
    <property type="entry name" value="DnaA"/>
    <property type="match status" value="1"/>
</dbReference>
<dbReference type="PANTHER" id="PTHR30050">
    <property type="entry name" value="CHROMOSOMAL REPLICATION INITIATOR PROTEIN DNAA"/>
    <property type="match status" value="1"/>
</dbReference>
<dbReference type="PANTHER" id="PTHR30050:SF2">
    <property type="entry name" value="CHROMOSOMAL REPLICATION INITIATOR PROTEIN DNAA"/>
    <property type="match status" value="1"/>
</dbReference>
<dbReference type="Pfam" id="PF00308">
    <property type="entry name" value="Bac_DnaA"/>
    <property type="match status" value="1"/>
</dbReference>
<dbReference type="Pfam" id="PF08299">
    <property type="entry name" value="Bac_DnaA_C"/>
    <property type="match status" value="1"/>
</dbReference>
<dbReference type="Pfam" id="PF11638">
    <property type="entry name" value="DnaA_N"/>
    <property type="match status" value="1"/>
</dbReference>
<dbReference type="PRINTS" id="PR00051">
    <property type="entry name" value="DNAA"/>
</dbReference>
<dbReference type="SMART" id="SM00382">
    <property type="entry name" value="AAA"/>
    <property type="match status" value="1"/>
</dbReference>
<dbReference type="SMART" id="SM00760">
    <property type="entry name" value="Bac_DnaA_C"/>
    <property type="match status" value="1"/>
</dbReference>
<dbReference type="SUPFAM" id="SSF52540">
    <property type="entry name" value="P-loop containing nucleoside triphosphate hydrolases"/>
    <property type="match status" value="1"/>
</dbReference>
<dbReference type="SUPFAM" id="SSF48295">
    <property type="entry name" value="TrpR-like"/>
    <property type="match status" value="1"/>
</dbReference>
<dbReference type="PROSITE" id="PS01008">
    <property type="entry name" value="DNAA"/>
    <property type="match status" value="1"/>
</dbReference>
<sequence length="452" mass="51862">MSSTVSTLWRDCLLQLQDQVSSNDFTTWLRPLQDDVSESNMILYAPNCFIKGWVENHYLTQITKLAQQLLNNDQFMVKIQDGIKPTEKTTTNVEQKTQNENCHNEITSQQNYRSYLNKNHVFDNFVEGKSNQLARAVAQKVAKNPGEQSANPLFLYGGTGLGKTHLLHAVGNGILANNPHAQVVYMHAERFMQSYVKALKSDRMDSFKRFYRTVDALLIDDIQFFAGKDGTQEEFFHIFNSLFERGRQIILTSDRYPKEIEKIEDRLKSRFGWGISVAIEPPELETRVAILLKKAEEKNMVLPEEVAMFIGGKLRTNVRELEGALNRVHAHAEFTGKAITIDFVRETLKDMLALQDKLVTIENIQKIVADYYRIKISDLKSKRRSRNITRPRQLAMALAKELTNRSLPEIGRNFGDRDHTTVLHACKAIAKLREEDNGIQEDWSNLIRTLSV</sequence>
<proteinExistence type="inferred from homology"/>
<gene>
    <name evidence="1" type="primary">dnaA</name>
    <name type="ordered locus">HS_0136</name>
</gene>